<dbReference type="EMBL" id="AF174428">
    <property type="protein sequence ID" value="AAF14549.1"/>
    <property type="molecule type" value="mRNA"/>
</dbReference>
<dbReference type="EMBL" id="AC021044">
    <property type="protein sequence ID" value="AAF98435.1"/>
    <property type="molecule type" value="Genomic_DNA"/>
</dbReference>
<dbReference type="EMBL" id="CP002684">
    <property type="protein sequence ID" value="AEE30930.1"/>
    <property type="molecule type" value="Genomic_DNA"/>
</dbReference>
<dbReference type="EMBL" id="CP002684">
    <property type="protein sequence ID" value="ANM60570.1"/>
    <property type="molecule type" value="Genomic_DNA"/>
</dbReference>
<dbReference type="EMBL" id="AF370177">
    <property type="protein sequence ID" value="AAK43992.1"/>
    <property type="molecule type" value="mRNA"/>
</dbReference>
<dbReference type="EMBL" id="AY056389">
    <property type="protein sequence ID" value="AAL08245.1"/>
    <property type="molecule type" value="mRNA"/>
</dbReference>
<dbReference type="EMBL" id="AY059137">
    <property type="protein sequence ID" value="AAL15243.1"/>
    <property type="molecule type" value="mRNA"/>
</dbReference>
<dbReference type="EMBL" id="AY086994">
    <property type="protein sequence ID" value="AAM64555.1"/>
    <property type="molecule type" value="mRNA"/>
</dbReference>
<dbReference type="PIR" id="A86408">
    <property type="entry name" value="A86408"/>
</dbReference>
<dbReference type="RefSeq" id="NP_001322847.1">
    <property type="nucleotide sequence ID" value="NM_001332805.1"/>
</dbReference>
<dbReference type="RefSeq" id="NP_174141.1">
    <property type="nucleotide sequence ID" value="NM_102585.3"/>
</dbReference>
<dbReference type="SMR" id="Q9SE96"/>
<dbReference type="BioGRID" id="24949">
    <property type="interactions" value="7"/>
</dbReference>
<dbReference type="FunCoup" id="Q9SE96">
    <property type="interactions" value="1575"/>
</dbReference>
<dbReference type="STRING" id="3702.Q9SE96"/>
<dbReference type="SwissPalm" id="Q9SE96"/>
<dbReference type="PaxDb" id="3702-AT1G28200.1"/>
<dbReference type="ProteomicsDB" id="224769"/>
<dbReference type="EnsemblPlants" id="AT1G28200.1">
    <property type="protein sequence ID" value="AT1G28200.1"/>
    <property type="gene ID" value="AT1G28200"/>
</dbReference>
<dbReference type="EnsemblPlants" id="AT1G28200.2">
    <property type="protein sequence ID" value="AT1G28200.2"/>
    <property type="gene ID" value="AT1G28200"/>
</dbReference>
<dbReference type="GeneID" id="839714"/>
<dbReference type="Gramene" id="AT1G28200.1">
    <property type="protein sequence ID" value="AT1G28200.1"/>
    <property type="gene ID" value="AT1G28200"/>
</dbReference>
<dbReference type="Gramene" id="AT1G28200.2">
    <property type="protein sequence ID" value="AT1G28200.2"/>
    <property type="gene ID" value="AT1G28200"/>
</dbReference>
<dbReference type="KEGG" id="ath:AT1G28200"/>
<dbReference type="Araport" id="AT1G28200"/>
<dbReference type="TAIR" id="AT1G28200">
    <property type="gene designation" value="FIP1"/>
</dbReference>
<dbReference type="eggNOG" id="ENOG502QUDB">
    <property type="taxonomic scope" value="Eukaryota"/>
</dbReference>
<dbReference type="HOGENOM" id="CLU_063785_1_0_1"/>
<dbReference type="InParanoid" id="Q9SE96"/>
<dbReference type="OMA" id="KTEWSFY"/>
<dbReference type="PhylomeDB" id="Q9SE96"/>
<dbReference type="PRO" id="PR:Q9SE96"/>
<dbReference type="Proteomes" id="UP000006548">
    <property type="component" value="Chromosome 1"/>
</dbReference>
<dbReference type="ExpressionAtlas" id="Q9SE96">
    <property type="expression patterns" value="baseline and differential"/>
</dbReference>
<dbReference type="GO" id="GO:0005634">
    <property type="term" value="C:nucleus"/>
    <property type="evidence" value="ECO:0007005"/>
    <property type="project" value="TAIR"/>
</dbReference>
<dbReference type="Gene3D" id="2.30.29.30">
    <property type="entry name" value="Pleckstrin-homology domain (PH domain)/Phosphotyrosine-binding domain (PTB)"/>
    <property type="match status" value="1"/>
</dbReference>
<dbReference type="InterPro" id="IPR037848">
    <property type="entry name" value="GEM-like"/>
</dbReference>
<dbReference type="InterPro" id="IPR004182">
    <property type="entry name" value="GRAM"/>
</dbReference>
<dbReference type="InterPro" id="IPR011993">
    <property type="entry name" value="PH-like_dom_sf"/>
</dbReference>
<dbReference type="PANTHER" id="PTHR31969">
    <property type="entry name" value="GEM-LIKE PROTEIN 2"/>
    <property type="match status" value="1"/>
</dbReference>
<dbReference type="Pfam" id="PF02893">
    <property type="entry name" value="GRAM"/>
    <property type="match status" value="1"/>
</dbReference>
<dbReference type="SMART" id="SM00568">
    <property type="entry name" value="GRAM"/>
    <property type="match status" value="1"/>
</dbReference>
<protein>
    <recommendedName>
        <fullName>GEM-like protein 1</fullName>
    </recommendedName>
    <alternativeName>
        <fullName>Forming homology-interacting protein 1</fullName>
        <shortName>FH-interacting protein 1</shortName>
    </alternativeName>
</protein>
<feature type="chain" id="PRO_0000311665" description="GEM-like protein 1">
    <location>
        <begin position="1"/>
        <end position="259"/>
    </location>
</feature>
<feature type="domain" description="GRAM">
    <location>
        <begin position="138"/>
        <end position="215"/>
    </location>
</feature>
<feature type="region of interest" description="Disordered" evidence="1">
    <location>
        <begin position="1"/>
        <end position="79"/>
    </location>
</feature>
<feature type="compositionally biased region" description="Basic and acidic residues" evidence="1">
    <location>
        <begin position="1"/>
        <end position="11"/>
    </location>
</feature>
<feature type="compositionally biased region" description="Low complexity" evidence="1">
    <location>
        <begin position="13"/>
        <end position="30"/>
    </location>
</feature>
<gene>
    <name type="primary">FIP1</name>
    <name type="ordered locus">At1g28200</name>
    <name type="ORF">F3H9.14</name>
</gene>
<accession>Q9SE96</accession>
<sequence>MSGQENHDHGRISSTPAAASEPSKAAAHSSDYAPYPKLDPTDVTPPPPQPIPTGAAATTMPAESNPYVSPSPAPRNTMDSVKDTLGKWGKMAADATKKAEDLAGNFWQHLKTGPSVADAAVSRIAQGTKILAEGGYEKVFKQTFDCLPDEKLLKTYACYLSTSAGPVLGVMYLSTHKLAFSSDNPLSYKEGEQTLWSYYKVVLPANQLKAVNPSTSRVNTSDKYIQVISIDNHEFWFMGFVTYESAVKSLQEAVQSHGP</sequence>
<evidence type="ECO:0000256" key="1">
    <source>
        <dbReference type="SAM" id="MobiDB-lite"/>
    </source>
</evidence>
<evidence type="ECO:0000269" key="2">
    <source>
    </source>
</evidence>
<evidence type="ECO:0000305" key="3"/>
<organism>
    <name type="scientific">Arabidopsis thaliana</name>
    <name type="common">Mouse-ear cress</name>
    <dbReference type="NCBI Taxonomy" id="3702"/>
    <lineage>
        <taxon>Eukaryota</taxon>
        <taxon>Viridiplantae</taxon>
        <taxon>Streptophyta</taxon>
        <taxon>Embryophyta</taxon>
        <taxon>Tracheophyta</taxon>
        <taxon>Spermatophyta</taxon>
        <taxon>Magnoliopsida</taxon>
        <taxon>eudicotyledons</taxon>
        <taxon>Gunneridae</taxon>
        <taxon>Pentapetalae</taxon>
        <taxon>rosids</taxon>
        <taxon>malvids</taxon>
        <taxon>Brassicales</taxon>
        <taxon>Brassicaceae</taxon>
        <taxon>Camelineae</taxon>
        <taxon>Arabidopsis</taxon>
    </lineage>
</organism>
<proteinExistence type="evidence at protein level"/>
<comment type="subunit">
    <text evidence="2">Interacts with AFH1.</text>
</comment>
<comment type="similarity">
    <text evidence="3">Belongs to the GEM family.</text>
</comment>
<reference key="1">
    <citation type="journal article" date="2000" name="Plant Cell Physiol.">
        <title>Characterization of the Arabidopsis formin-like protein AFH1 and its interacting protein.</title>
        <authorList>
            <person name="Banno H."/>
            <person name="Chua N.-H."/>
        </authorList>
    </citation>
    <scope>NUCLEOTIDE SEQUENCE [MRNA]</scope>
    <scope>INTERACTION WITH AFH1</scope>
    <source>
        <strain>cv. Landsberg erecta</strain>
    </source>
</reference>
<reference key="2">
    <citation type="journal article" date="2000" name="Nature">
        <title>Sequence and analysis of chromosome 1 of the plant Arabidopsis thaliana.</title>
        <authorList>
            <person name="Theologis A."/>
            <person name="Ecker J.R."/>
            <person name="Palm C.J."/>
            <person name="Federspiel N.A."/>
            <person name="Kaul S."/>
            <person name="White O."/>
            <person name="Alonso J."/>
            <person name="Altafi H."/>
            <person name="Araujo R."/>
            <person name="Bowman C.L."/>
            <person name="Brooks S.Y."/>
            <person name="Buehler E."/>
            <person name="Chan A."/>
            <person name="Chao Q."/>
            <person name="Chen H."/>
            <person name="Cheuk R.F."/>
            <person name="Chin C.W."/>
            <person name="Chung M.K."/>
            <person name="Conn L."/>
            <person name="Conway A.B."/>
            <person name="Conway A.R."/>
            <person name="Creasy T.H."/>
            <person name="Dewar K."/>
            <person name="Dunn P."/>
            <person name="Etgu P."/>
            <person name="Feldblyum T.V."/>
            <person name="Feng J.-D."/>
            <person name="Fong B."/>
            <person name="Fujii C.Y."/>
            <person name="Gill J.E."/>
            <person name="Goldsmith A.D."/>
            <person name="Haas B."/>
            <person name="Hansen N.F."/>
            <person name="Hughes B."/>
            <person name="Huizar L."/>
            <person name="Hunter J.L."/>
            <person name="Jenkins J."/>
            <person name="Johnson-Hopson C."/>
            <person name="Khan S."/>
            <person name="Khaykin E."/>
            <person name="Kim C.J."/>
            <person name="Koo H.L."/>
            <person name="Kremenetskaia I."/>
            <person name="Kurtz D.B."/>
            <person name="Kwan A."/>
            <person name="Lam B."/>
            <person name="Langin-Hooper S."/>
            <person name="Lee A."/>
            <person name="Lee J.M."/>
            <person name="Lenz C.A."/>
            <person name="Li J.H."/>
            <person name="Li Y.-P."/>
            <person name="Lin X."/>
            <person name="Liu S.X."/>
            <person name="Liu Z.A."/>
            <person name="Luros J.S."/>
            <person name="Maiti R."/>
            <person name="Marziali A."/>
            <person name="Militscher J."/>
            <person name="Miranda M."/>
            <person name="Nguyen M."/>
            <person name="Nierman W.C."/>
            <person name="Osborne B.I."/>
            <person name="Pai G."/>
            <person name="Peterson J."/>
            <person name="Pham P.K."/>
            <person name="Rizzo M."/>
            <person name="Rooney T."/>
            <person name="Rowley D."/>
            <person name="Sakano H."/>
            <person name="Salzberg S.L."/>
            <person name="Schwartz J.R."/>
            <person name="Shinn P."/>
            <person name="Southwick A.M."/>
            <person name="Sun H."/>
            <person name="Tallon L.J."/>
            <person name="Tambunga G."/>
            <person name="Toriumi M.J."/>
            <person name="Town C.D."/>
            <person name="Utterback T."/>
            <person name="Van Aken S."/>
            <person name="Vaysberg M."/>
            <person name="Vysotskaia V.S."/>
            <person name="Walker M."/>
            <person name="Wu D."/>
            <person name="Yu G."/>
            <person name="Fraser C.M."/>
            <person name="Venter J.C."/>
            <person name="Davis R.W."/>
        </authorList>
    </citation>
    <scope>NUCLEOTIDE SEQUENCE [LARGE SCALE GENOMIC DNA]</scope>
    <source>
        <strain>cv. Columbia</strain>
    </source>
</reference>
<reference key="3">
    <citation type="journal article" date="2017" name="Plant J.">
        <title>Araport11: a complete reannotation of the Arabidopsis thaliana reference genome.</title>
        <authorList>
            <person name="Cheng C.Y."/>
            <person name="Krishnakumar V."/>
            <person name="Chan A.P."/>
            <person name="Thibaud-Nissen F."/>
            <person name="Schobel S."/>
            <person name="Town C.D."/>
        </authorList>
    </citation>
    <scope>GENOME REANNOTATION</scope>
    <source>
        <strain>cv. Columbia</strain>
    </source>
</reference>
<reference key="4">
    <citation type="journal article" date="2003" name="Science">
        <title>Empirical analysis of transcriptional activity in the Arabidopsis genome.</title>
        <authorList>
            <person name="Yamada K."/>
            <person name="Lim J."/>
            <person name="Dale J.M."/>
            <person name="Chen H."/>
            <person name="Shinn P."/>
            <person name="Palm C.J."/>
            <person name="Southwick A.M."/>
            <person name="Wu H.C."/>
            <person name="Kim C.J."/>
            <person name="Nguyen M."/>
            <person name="Pham P.K."/>
            <person name="Cheuk R.F."/>
            <person name="Karlin-Newmann G."/>
            <person name="Liu S.X."/>
            <person name="Lam B."/>
            <person name="Sakano H."/>
            <person name="Wu T."/>
            <person name="Yu G."/>
            <person name="Miranda M."/>
            <person name="Quach H.L."/>
            <person name="Tripp M."/>
            <person name="Chang C.H."/>
            <person name="Lee J.M."/>
            <person name="Toriumi M.J."/>
            <person name="Chan M.M."/>
            <person name="Tang C.C."/>
            <person name="Onodera C.S."/>
            <person name="Deng J.M."/>
            <person name="Akiyama K."/>
            <person name="Ansari Y."/>
            <person name="Arakawa T."/>
            <person name="Banh J."/>
            <person name="Banno F."/>
            <person name="Bowser L."/>
            <person name="Brooks S.Y."/>
            <person name="Carninci P."/>
            <person name="Chao Q."/>
            <person name="Choy N."/>
            <person name="Enju A."/>
            <person name="Goldsmith A.D."/>
            <person name="Gurjal M."/>
            <person name="Hansen N.F."/>
            <person name="Hayashizaki Y."/>
            <person name="Johnson-Hopson C."/>
            <person name="Hsuan V.W."/>
            <person name="Iida K."/>
            <person name="Karnes M."/>
            <person name="Khan S."/>
            <person name="Koesema E."/>
            <person name="Ishida J."/>
            <person name="Jiang P.X."/>
            <person name="Jones T."/>
            <person name="Kawai J."/>
            <person name="Kamiya A."/>
            <person name="Meyers C."/>
            <person name="Nakajima M."/>
            <person name="Narusaka M."/>
            <person name="Seki M."/>
            <person name="Sakurai T."/>
            <person name="Satou M."/>
            <person name="Tamse R."/>
            <person name="Vaysberg M."/>
            <person name="Wallender E.K."/>
            <person name="Wong C."/>
            <person name="Yamamura Y."/>
            <person name="Yuan S."/>
            <person name="Shinozaki K."/>
            <person name="Davis R.W."/>
            <person name="Theologis A."/>
            <person name="Ecker J.R."/>
        </authorList>
    </citation>
    <scope>NUCLEOTIDE SEQUENCE [LARGE SCALE MRNA]</scope>
    <source>
        <strain>cv. Columbia</strain>
    </source>
</reference>
<reference key="5">
    <citation type="submission" date="2002-03" db="EMBL/GenBank/DDBJ databases">
        <title>Full-length cDNA from Arabidopsis thaliana.</title>
        <authorList>
            <person name="Brover V.V."/>
            <person name="Troukhan M.E."/>
            <person name="Alexandrov N.A."/>
            <person name="Lu Y.-P."/>
            <person name="Flavell R.B."/>
            <person name="Feldmann K.A."/>
        </authorList>
    </citation>
    <scope>NUCLEOTIDE SEQUENCE [LARGE SCALE MRNA]</scope>
</reference>
<keyword id="KW-1185">Reference proteome</keyword>
<name>GEML1_ARATH</name>